<dbReference type="EC" id="2.3.2.27" evidence="10"/>
<dbReference type="EMBL" id="AF162680">
    <property type="protein sequence ID" value="AAD46623.2"/>
    <property type="molecule type" value="mRNA"/>
</dbReference>
<dbReference type="EMBL" id="AK023579">
    <property type="protein sequence ID" value="BAB14614.1"/>
    <property type="molecule type" value="mRNA"/>
</dbReference>
<dbReference type="EMBL" id="AK315761">
    <property type="protein sequence ID" value="BAG38114.1"/>
    <property type="molecule type" value="mRNA"/>
</dbReference>
<dbReference type="EMBL" id="BT006878">
    <property type="protein sequence ID" value="AAP35524.1"/>
    <property type="molecule type" value="mRNA"/>
</dbReference>
<dbReference type="EMBL" id="CR457150">
    <property type="protein sequence ID" value="CAG33431.1"/>
    <property type="molecule type" value="mRNA"/>
</dbReference>
<dbReference type="EMBL" id="CH471088">
    <property type="protein sequence ID" value="EAX01280.1"/>
    <property type="molecule type" value="Genomic_DNA"/>
</dbReference>
<dbReference type="EMBL" id="BC018107">
    <property type="protein sequence ID" value="AAH18107.1"/>
    <property type="molecule type" value="mRNA"/>
</dbReference>
<dbReference type="EMBL" id="AL133557">
    <property type="protein sequence ID" value="CAB63712.1"/>
    <property type="molecule type" value="mRNA"/>
</dbReference>
<dbReference type="CCDS" id="CCDS11903.1">
    <molecule id="Q8WVD3-1"/>
</dbReference>
<dbReference type="CCDS" id="CCDS11904.1">
    <molecule id="Q8WVD3-2"/>
</dbReference>
<dbReference type="PIR" id="T43439">
    <property type="entry name" value="T43439"/>
</dbReference>
<dbReference type="RefSeq" id="NP_001178253.2">
    <molecule id="Q8WVD3-1"/>
    <property type="nucleotide sequence ID" value="NM_001191324.2"/>
</dbReference>
<dbReference type="RefSeq" id="NP_057355.2">
    <molecule id="Q8WVD3-1"/>
    <property type="nucleotide sequence ID" value="NM_016271.4"/>
</dbReference>
<dbReference type="RefSeq" id="NP_937761.1">
    <molecule id="Q8WVD3-2"/>
    <property type="nucleotide sequence ID" value="NM_198128.3"/>
</dbReference>
<dbReference type="RefSeq" id="XP_005258343.1">
    <molecule id="Q8WVD3-2"/>
    <property type="nucleotide sequence ID" value="XM_005258286.3"/>
</dbReference>
<dbReference type="BioGRID" id="119545">
    <property type="interactions" value="102"/>
</dbReference>
<dbReference type="FunCoup" id="Q8WVD3">
    <property type="interactions" value="2309"/>
</dbReference>
<dbReference type="IntAct" id="Q8WVD3">
    <property type="interactions" value="73"/>
</dbReference>
<dbReference type="STRING" id="9606.ENSP00000261593"/>
<dbReference type="iPTMnet" id="Q8WVD3"/>
<dbReference type="PhosphoSitePlus" id="Q8WVD3"/>
<dbReference type="BioMuta" id="RNF138"/>
<dbReference type="DMDM" id="74762632"/>
<dbReference type="jPOST" id="Q8WVD3"/>
<dbReference type="MassIVE" id="Q8WVD3"/>
<dbReference type="PaxDb" id="9606-ENSP00000261593"/>
<dbReference type="PeptideAtlas" id="Q8WVD3"/>
<dbReference type="ProteomicsDB" id="74778">
    <molecule id="Q8WVD3-1"/>
</dbReference>
<dbReference type="ProteomicsDB" id="74779">
    <molecule id="Q8WVD3-2"/>
</dbReference>
<dbReference type="Pumba" id="Q8WVD3"/>
<dbReference type="Antibodypedia" id="22190">
    <property type="antibodies" value="214 antibodies from 27 providers"/>
</dbReference>
<dbReference type="DNASU" id="51444"/>
<dbReference type="Ensembl" id="ENST00000257190.9">
    <molecule id="Q8WVD3-2"/>
    <property type="protein sequence ID" value="ENSP00000257190.5"/>
    <property type="gene ID" value="ENSG00000134758.14"/>
</dbReference>
<dbReference type="Ensembl" id="ENST00000261593.8">
    <molecule id="Q8WVD3-1"/>
    <property type="protein sequence ID" value="ENSP00000261593.3"/>
    <property type="gene ID" value="ENSG00000134758.14"/>
</dbReference>
<dbReference type="GeneID" id="51444"/>
<dbReference type="KEGG" id="hsa:51444"/>
<dbReference type="MANE-Select" id="ENST00000261593.8">
    <property type="protein sequence ID" value="ENSP00000261593.3"/>
    <property type="RefSeq nucleotide sequence ID" value="NM_016271.5"/>
    <property type="RefSeq protein sequence ID" value="NP_057355.2"/>
</dbReference>
<dbReference type="UCSC" id="uc002kxg.3">
    <molecule id="Q8WVD3-1"/>
    <property type="organism name" value="human"/>
</dbReference>
<dbReference type="AGR" id="HGNC:17765"/>
<dbReference type="CTD" id="51444"/>
<dbReference type="DisGeNET" id="51444"/>
<dbReference type="GeneCards" id="RNF138"/>
<dbReference type="HGNC" id="HGNC:17765">
    <property type="gene designation" value="RNF138"/>
</dbReference>
<dbReference type="HPA" id="ENSG00000134758">
    <property type="expression patterns" value="Tissue enhanced (bone marrow, testis)"/>
</dbReference>
<dbReference type="MIM" id="616319">
    <property type="type" value="gene"/>
</dbReference>
<dbReference type="neXtProt" id="NX_Q8WVD3"/>
<dbReference type="OpenTargets" id="ENSG00000134758"/>
<dbReference type="PharmGKB" id="PA134952071"/>
<dbReference type="VEuPathDB" id="HostDB:ENSG00000134758"/>
<dbReference type="eggNOG" id="ENOG502RP2G">
    <property type="taxonomic scope" value="Eukaryota"/>
</dbReference>
<dbReference type="GeneTree" id="ENSGT00950000182909"/>
<dbReference type="HOGENOM" id="CLU_092448_0_0_1"/>
<dbReference type="InParanoid" id="Q8WVD3"/>
<dbReference type="OMA" id="CFNEEDF"/>
<dbReference type="OrthoDB" id="7873042at2759"/>
<dbReference type="PAN-GO" id="Q8WVD3">
    <property type="GO annotations" value="5 GO annotations based on evolutionary models"/>
</dbReference>
<dbReference type="PhylomeDB" id="Q8WVD3"/>
<dbReference type="TreeFam" id="TF331012"/>
<dbReference type="PathwayCommons" id="Q8WVD3"/>
<dbReference type="Reactome" id="R-HSA-983168">
    <property type="pathway name" value="Antigen processing: Ubiquitination &amp; Proteasome degradation"/>
</dbReference>
<dbReference type="SignaLink" id="Q8WVD3"/>
<dbReference type="SIGNOR" id="Q8WVD3"/>
<dbReference type="UniPathway" id="UPA00143"/>
<dbReference type="BioGRID-ORCS" id="51444">
    <property type="hits" value="16 hits in 1210 CRISPR screens"/>
</dbReference>
<dbReference type="ChiTaRS" id="RNF138">
    <property type="organism name" value="human"/>
</dbReference>
<dbReference type="GenomeRNAi" id="51444"/>
<dbReference type="Pharos" id="Q8WVD3">
    <property type="development level" value="Tbio"/>
</dbReference>
<dbReference type="PRO" id="PR:Q8WVD3"/>
<dbReference type="Proteomes" id="UP000005640">
    <property type="component" value="Chromosome 18"/>
</dbReference>
<dbReference type="RNAct" id="Q8WVD3">
    <property type="molecule type" value="protein"/>
</dbReference>
<dbReference type="Bgee" id="ENSG00000134758">
    <property type="expression patterns" value="Expressed in primordial germ cell in gonad and 207 other cell types or tissues"/>
</dbReference>
<dbReference type="ExpressionAtlas" id="Q8WVD3">
    <property type="expression patterns" value="baseline and differential"/>
</dbReference>
<dbReference type="GO" id="GO:0005634">
    <property type="term" value="C:nucleus"/>
    <property type="evidence" value="ECO:0007005"/>
    <property type="project" value="UniProtKB"/>
</dbReference>
<dbReference type="GO" id="GO:0035861">
    <property type="term" value="C:site of double-strand break"/>
    <property type="evidence" value="ECO:0000314"/>
    <property type="project" value="UniProtKB"/>
</dbReference>
<dbReference type="GO" id="GO:0019901">
    <property type="term" value="F:protein kinase binding"/>
    <property type="evidence" value="ECO:0000353"/>
    <property type="project" value="UniProtKB"/>
</dbReference>
<dbReference type="GO" id="GO:0003697">
    <property type="term" value="F:single-stranded DNA binding"/>
    <property type="evidence" value="ECO:0000314"/>
    <property type="project" value="UniProtKB"/>
</dbReference>
<dbReference type="GO" id="GO:0061630">
    <property type="term" value="F:ubiquitin protein ligase activity"/>
    <property type="evidence" value="ECO:0000315"/>
    <property type="project" value="UniProtKB"/>
</dbReference>
<dbReference type="GO" id="GO:0008270">
    <property type="term" value="F:zinc ion binding"/>
    <property type="evidence" value="ECO:0007669"/>
    <property type="project" value="UniProtKB-KW"/>
</dbReference>
<dbReference type="GO" id="GO:1990830">
    <property type="term" value="P:cellular response to leukemia inhibitory factor"/>
    <property type="evidence" value="ECO:0007669"/>
    <property type="project" value="Ensembl"/>
</dbReference>
<dbReference type="GO" id="GO:0010792">
    <property type="term" value="P:DNA double-strand break processing involved in repair via single-strand annealing"/>
    <property type="evidence" value="ECO:0000315"/>
    <property type="project" value="UniProtKB"/>
</dbReference>
<dbReference type="GO" id="GO:0000724">
    <property type="term" value="P:double-strand break repair via homologous recombination"/>
    <property type="evidence" value="ECO:0000315"/>
    <property type="project" value="UniProtKB"/>
</dbReference>
<dbReference type="GO" id="GO:0016567">
    <property type="term" value="P:protein ubiquitination"/>
    <property type="evidence" value="ECO:0000315"/>
    <property type="project" value="UniProtKB"/>
</dbReference>
<dbReference type="GO" id="GO:0016055">
    <property type="term" value="P:Wnt signaling pathway"/>
    <property type="evidence" value="ECO:0007669"/>
    <property type="project" value="UniProtKB-KW"/>
</dbReference>
<dbReference type="CDD" id="cd16544">
    <property type="entry name" value="RING-HC_RNF138"/>
    <property type="match status" value="1"/>
</dbReference>
<dbReference type="FunFam" id="3.30.40.10:FF:000267">
    <property type="entry name" value="E3 ubiquitin-protein ligase RNF138 isoform X1"/>
    <property type="match status" value="1"/>
</dbReference>
<dbReference type="Gene3D" id="3.30.40.10">
    <property type="entry name" value="Zinc/RING finger domain, C3HC4 (zinc finger)"/>
    <property type="match status" value="1"/>
</dbReference>
<dbReference type="InterPro" id="IPR008598">
    <property type="entry name" value="Di19_Zn-bd"/>
</dbReference>
<dbReference type="InterPro" id="IPR052498">
    <property type="entry name" value="E3_ubiq-protein_ligase_RNF138"/>
</dbReference>
<dbReference type="InterPro" id="IPR034734">
    <property type="entry name" value="ZF_C2HC_RNF"/>
</dbReference>
<dbReference type="InterPro" id="IPR001841">
    <property type="entry name" value="Znf_RING"/>
</dbReference>
<dbReference type="InterPro" id="IPR013083">
    <property type="entry name" value="Znf_RING/FYVE/PHD"/>
</dbReference>
<dbReference type="PANTHER" id="PTHR46968">
    <property type="entry name" value="E3 UBIQUITIN-PROTEIN LIGASE RNF138"/>
    <property type="match status" value="1"/>
</dbReference>
<dbReference type="PANTHER" id="PTHR46968:SF2">
    <property type="entry name" value="E3 UBIQUITIN-PROTEIN LIGASE RNF138"/>
    <property type="match status" value="1"/>
</dbReference>
<dbReference type="Pfam" id="PF13923">
    <property type="entry name" value="zf-C3HC4_2"/>
    <property type="match status" value="1"/>
</dbReference>
<dbReference type="Pfam" id="PF05605">
    <property type="entry name" value="zf-Di19"/>
    <property type="match status" value="1"/>
</dbReference>
<dbReference type="Pfam" id="PF18574">
    <property type="entry name" value="zf_C2HC_14"/>
    <property type="match status" value="1"/>
</dbReference>
<dbReference type="SMART" id="SM00184">
    <property type="entry name" value="RING"/>
    <property type="match status" value="2"/>
</dbReference>
<dbReference type="SUPFAM" id="SSF57850">
    <property type="entry name" value="RING/U-box"/>
    <property type="match status" value="1"/>
</dbReference>
<dbReference type="PROSITE" id="PS51803">
    <property type="entry name" value="ZF_C2HC_RNF"/>
    <property type="match status" value="1"/>
</dbReference>
<dbReference type="PROSITE" id="PS50089">
    <property type="entry name" value="ZF_RING_2"/>
    <property type="match status" value="1"/>
</dbReference>
<feature type="initiator methionine" description="Removed" evidence="12">
    <location>
        <position position="1"/>
    </location>
</feature>
<feature type="chain" id="PRO_0000261607" description="E3 ubiquitin-protein ligase RNF138">
    <location>
        <begin position="2"/>
        <end position="245"/>
    </location>
</feature>
<feature type="domain" description="UIM" evidence="10">
    <location>
        <begin position="225"/>
        <end position="243"/>
    </location>
</feature>
<feature type="zinc finger region" description="RING-type" evidence="2">
    <location>
        <begin position="18"/>
        <end position="58"/>
    </location>
</feature>
<feature type="zinc finger region" description="C2HC RNF-type" evidence="3 10">
    <location>
        <begin position="86"/>
        <end position="105"/>
    </location>
</feature>
<feature type="zinc finger region" description="C2H2-type 1" evidence="1">
    <location>
        <begin position="157"/>
        <end position="180"/>
    </location>
</feature>
<feature type="zinc finger region" description="C2H2-type 2" evidence="10">
    <location>
        <begin position="187"/>
        <end position="215"/>
    </location>
</feature>
<feature type="region of interest" description="Disordered" evidence="4">
    <location>
        <begin position="125"/>
        <end position="154"/>
    </location>
</feature>
<feature type="binding site" evidence="3">
    <location>
        <position position="86"/>
    </location>
    <ligand>
        <name>Zn(2+)</name>
        <dbReference type="ChEBI" id="CHEBI:29105"/>
    </ligand>
</feature>
<feature type="binding site" evidence="3">
    <location>
        <position position="89"/>
    </location>
    <ligand>
        <name>Zn(2+)</name>
        <dbReference type="ChEBI" id="CHEBI:29105"/>
    </ligand>
</feature>
<feature type="binding site" evidence="3">
    <location>
        <position position="101"/>
    </location>
    <ligand>
        <name>Zn(2+)</name>
        <dbReference type="ChEBI" id="CHEBI:29105"/>
    </ligand>
</feature>
<feature type="binding site" evidence="3">
    <location>
        <position position="105"/>
    </location>
    <ligand>
        <name>Zn(2+)</name>
        <dbReference type="ChEBI" id="CHEBI:29105"/>
    </ligand>
</feature>
<feature type="modified residue" description="N-acetylalanine" evidence="12">
    <location>
        <position position="2"/>
    </location>
</feature>
<feature type="modified residue" description="Phosphothreonine" evidence="13">
    <location>
        <position position="142"/>
    </location>
</feature>
<feature type="splice variant" id="VSP_021732" description="In isoform 2." evidence="8">
    <location>
        <begin position="38"/>
        <end position="131"/>
    </location>
</feature>
<feature type="sequence variant" id="VAR_052109" description="In dbSNP:rs7229690.">
    <original>K</original>
    <variation>R</variation>
    <location>
        <position position="81"/>
    </location>
</feature>
<feature type="mutagenesis site" description="Catalytic inactive mutant that abolishes ability to promote DNA resection and homologous recombination." evidence="7">
    <original>CPVC</original>
    <variation>APVA</variation>
    <location>
        <begin position="18"/>
        <end position="21"/>
    </location>
</feature>
<feature type="mutagenesis site" description="Catalytic inactive mutant that abolishes ability to promote DNA resection and homologous recombination; when associated with A-54." evidence="6">
    <original>C</original>
    <variation>A</variation>
    <location>
        <position position="18"/>
    </location>
</feature>
<feature type="mutagenesis site" description="Catalytic inactive mutant that abolishes ability to promote DNA resection and homologous recombination; when associated with A-18." evidence="6">
    <original>C</original>
    <variation>A</variation>
    <location>
        <position position="54"/>
    </location>
</feature>
<feature type="sequence conflict" description="In Ref. 1; AAD46623." evidence="10" ref="1">
    <original>I</original>
    <variation>V</variation>
    <location>
        <position position="118"/>
    </location>
</feature>
<feature type="sequence conflict" description="In Ref. 1; AAD46623." evidence="10" ref="1">
    <original>H</original>
    <variation>R</variation>
    <location>
        <position position="215"/>
    </location>
</feature>
<accession>Q8WVD3</accession>
<accession>B2RE17</accession>
<accession>Q9H8K2</accession>
<accession>Q9UF87</accession>
<accession>Q9UKI6</accession>
<organism>
    <name type="scientific">Homo sapiens</name>
    <name type="common">Human</name>
    <dbReference type="NCBI Taxonomy" id="9606"/>
    <lineage>
        <taxon>Eukaryota</taxon>
        <taxon>Metazoa</taxon>
        <taxon>Chordata</taxon>
        <taxon>Craniata</taxon>
        <taxon>Vertebrata</taxon>
        <taxon>Euteleostomi</taxon>
        <taxon>Mammalia</taxon>
        <taxon>Eutheria</taxon>
        <taxon>Euarchontoglires</taxon>
        <taxon>Primates</taxon>
        <taxon>Haplorrhini</taxon>
        <taxon>Catarrhini</taxon>
        <taxon>Hominidae</taxon>
        <taxon>Homo</taxon>
    </lineage>
</organism>
<reference key="1">
    <citation type="submission" date="2000-04" db="EMBL/GenBank/DDBJ databases">
        <title>A new spermatogenesis-related gene.</title>
        <authorList>
            <person name="Wang L."/>
            <person name="Miao S."/>
            <person name="Yang J."/>
            <person name="Zhang X."/>
            <person name="Li M."/>
        </authorList>
    </citation>
    <scope>NUCLEOTIDE SEQUENCE [LARGE SCALE MRNA] (ISOFORM 1)</scope>
    <source>
        <tissue>Testis</tissue>
    </source>
</reference>
<reference key="2">
    <citation type="journal article" date="2004" name="Nat. Genet.">
        <title>Complete sequencing and characterization of 21,243 full-length human cDNAs.</title>
        <authorList>
            <person name="Ota T."/>
            <person name="Suzuki Y."/>
            <person name="Nishikawa T."/>
            <person name="Otsuki T."/>
            <person name="Sugiyama T."/>
            <person name="Irie R."/>
            <person name="Wakamatsu A."/>
            <person name="Hayashi K."/>
            <person name="Sato H."/>
            <person name="Nagai K."/>
            <person name="Kimura K."/>
            <person name="Makita H."/>
            <person name="Sekine M."/>
            <person name="Obayashi M."/>
            <person name="Nishi T."/>
            <person name="Shibahara T."/>
            <person name="Tanaka T."/>
            <person name="Ishii S."/>
            <person name="Yamamoto J."/>
            <person name="Saito K."/>
            <person name="Kawai Y."/>
            <person name="Isono Y."/>
            <person name="Nakamura Y."/>
            <person name="Nagahari K."/>
            <person name="Murakami K."/>
            <person name="Yasuda T."/>
            <person name="Iwayanagi T."/>
            <person name="Wagatsuma M."/>
            <person name="Shiratori A."/>
            <person name="Sudo H."/>
            <person name="Hosoiri T."/>
            <person name="Kaku Y."/>
            <person name="Kodaira H."/>
            <person name="Kondo H."/>
            <person name="Sugawara M."/>
            <person name="Takahashi M."/>
            <person name="Kanda K."/>
            <person name="Yokoi T."/>
            <person name="Furuya T."/>
            <person name="Kikkawa E."/>
            <person name="Omura Y."/>
            <person name="Abe K."/>
            <person name="Kamihara K."/>
            <person name="Katsuta N."/>
            <person name="Sato K."/>
            <person name="Tanikawa M."/>
            <person name="Yamazaki M."/>
            <person name="Ninomiya K."/>
            <person name="Ishibashi T."/>
            <person name="Yamashita H."/>
            <person name="Murakawa K."/>
            <person name="Fujimori K."/>
            <person name="Tanai H."/>
            <person name="Kimata M."/>
            <person name="Watanabe M."/>
            <person name="Hiraoka S."/>
            <person name="Chiba Y."/>
            <person name="Ishida S."/>
            <person name="Ono Y."/>
            <person name="Takiguchi S."/>
            <person name="Watanabe S."/>
            <person name="Yosida M."/>
            <person name="Hotuta T."/>
            <person name="Kusano J."/>
            <person name="Kanehori K."/>
            <person name="Takahashi-Fujii A."/>
            <person name="Hara H."/>
            <person name="Tanase T.-O."/>
            <person name="Nomura Y."/>
            <person name="Togiya S."/>
            <person name="Komai F."/>
            <person name="Hara R."/>
            <person name="Takeuchi K."/>
            <person name="Arita M."/>
            <person name="Imose N."/>
            <person name="Musashino K."/>
            <person name="Yuuki H."/>
            <person name="Oshima A."/>
            <person name="Sasaki N."/>
            <person name="Aotsuka S."/>
            <person name="Yoshikawa Y."/>
            <person name="Matsunawa H."/>
            <person name="Ichihara T."/>
            <person name="Shiohata N."/>
            <person name="Sano S."/>
            <person name="Moriya S."/>
            <person name="Momiyama H."/>
            <person name="Satoh N."/>
            <person name="Takami S."/>
            <person name="Terashima Y."/>
            <person name="Suzuki O."/>
            <person name="Nakagawa S."/>
            <person name="Senoh A."/>
            <person name="Mizoguchi H."/>
            <person name="Goto Y."/>
            <person name="Shimizu F."/>
            <person name="Wakebe H."/>
            <person name="Hishigaki H."/>
            <person name="Watanabe T."/>
            <person name="Sugiyama A."/>
            <person name="Takemoto M."/>
            <person name="Kawakami B."/>
            <person name="Yamazaki M."/>
            <person name="Watanabe K."/>
            <person name="Kumagai A."/>
            <person name="Itakura S."/>
            <person name="Fukuzumi Y."/>
            <person name="Fujimori Y."/>
            <person name="Komiyama M."/>
            <person name="Tashiro H."/>
            <person name="Tanigami A."/>
            <person name="Fujiwara T."/>
            <person name="Ono T."/>
            <person name="Yamada K."/>
            <person name="Fujii Y."/>
            <person name="Ozaki K."/>
            <person name="Hirao M."/>
            <person name="Ohmori Y."/>
            <person name="Kawabata A."/>
            <person name="Hikiji T."/>
            <person name="Kobatake N."/>
            <person name="Inagaki H."/>
            <person name="Ikema Y."/>
            <person name="Okamoto S."/>
            <person name="Okitani R."/>
            <person name="Kawakami T."/>
            <person name="Noguchi S."/>
            <person name="Itoh T."/>
            <person name="Shigeta K."/>
            <person name="Senba T."/>
            <person name="Matsumura K."/>
            <person name="Nakajima Y."/>
            <person name="Mizuno T."/>
            <person name="Morinaga M."/>
            <person name="Sasaki M."/>
            <person name="Togashi T."/>
            <person name="Oyama M."/>
            <person name="Hata H."/>
            <person name="Watanabe M."/>
            <person name="Komatsu T."/>
            <person name="Mizushima-Sugano J."/>
            <person name="Satoh T."/>
            <person name="Shirai Y."/>
            <person name="Takahashi Y."/>
            <person name="Nakagawa K."/>
            <person name="Okumura K."/>
            <person name="Nagase T."/>
            <person name="Nomura N."/>
            <person name="Kikuchi H."/>
            <person name="Masuho Y."/>
            <person name="Yamashita R."/>
            <person name="Nakai K."/>
            <person name="Yada T."/>
            <person name="Nakamura Y."/>
            <person name="Ohara O."/>
            <person name="Isogai T."/>
            <person name="Sugano S."/>
        </authorList>
    </citation>
    <scope>NUCLEOTIDE SEQUENCE [LARGE SCALE MRNA] (ISOFORMS 1 AND 2)</scope>
    <source>
        <tissue>Placenta</tissue>
        <tissue>Trachea</tissue>
    </source>
</reference>
<reference key="3">
    <citation type="submission" date="2003-05" db="EMBL/GenBank/DDBJ databases">
        <title>Cloning of human full-length CDSs in BD Creator(TM) system donor vector.</title>
        <authorList>
            <person name="Kalnine N."/>
            <person name="Chen X."/>
            <person name="Rolfs A."/>
            <person name="Halleck A."/>
            <person name="Hines L."/>
            <person name="Eisenstein S."/>
            <person name="Koundinya M."/>
            <person name="Raphael J."/>
            <person name="Moreira D."/>
            <person name="Kelley T."/>
            <person name="LaBaer J."/>
            <person name="Lin Y."/>
            <person name="Phelan M."/>
            <person name="Farmer A."/>
        </authorList>
    </citation>
    <scope>NUCLEOTIDE SEQUENCE [LARGE SCALE MRNA] (ISOFORM 1)</scope>
</reference>
<reference key="4">
    <citation type="submission" date="2004-06" db="EMBL/GenBank/DDBJ databases">
        <title>Cloning of human full open reading frames in Gateway(TM) system entry vector (pDONR201).</title>
        <authorList>
            <person name="Ebert L."/>
            <person name="Schick M."/>
            <person name="Neubert P."/>
            <person name="Schatten R."/>
            <person name="Henze S."/>
            <person name="Korn B."/>
        </authorList>
    </citation>
    <scope>NUCLEOTIDE SEQUENCE [LARGE SCALE MRNA] (ISOFORM 1)</scope>
</reference>
<reference key="5">
    <citation type="submission" date="2005-07" db="EMBL/GenBank/DDBJ databases">
        <authorList>
            <person name="Mural R.J."/>
            <person name="Istrail S."/>
            <person name="Sutton G.G."/>
            <person name="Florea L."/>
            <person name="Halpern A.L."/>
            <person name="Mobarry C.M."/>
            <person name="Lippert R."/>
            <person name="Walenz B."/>
            <person name="Shatkay H."/>
            <person name="Dew I."/>
            <person name="Miller J.R."/>
            <person name="Flanigan M.J."/>
            <person name="Edwards N.J."/>
            <person name="Bolanos R."/>
            <person name="Fasulo D."/>
            <person name="Halldorsson B.V."/>
            <person name="Hannenhalli S."/>
            <person name="Turner R."/>
            <person name="Yooseph S."/>
            <person name="Lu F."/>
            <person name="Nusskern D.R."/>
            <person name="Shue B.C."/>
            <person name="Zheng X.H."/>
            <person name="Zhong F."/>
            <person name="Delcher A.L."/>
            <person name="Huson D.H."/>
            <person name="Kravitz S.A."/>
            <person name="Mouchard L."/>
            <person name="Reinert K."/>
            <person name="Remington K.A."/>
            <person name="Clark A.G."/>
            <person name="Waterman M.S."/>
            <person name="Eichler E.E."/>
            <person name="Adams M.D."/>
            <person name="Hunkapiller M.W."/>
            <person name="Myers E.W."/>
            <person name="Venter J.C."/>
        </authorList>
    </citation>
    <scope>NUCLEOTIDE SEQUENCE [LARGE SCALE GENOMIC DNA]</scope>
</reference>
<reference key="6">
    <citation type="journal article" date="2004" name="Genome Res.">
        <title>The status, quality, and expansion of the NIH full-length cDNA project: the Mammalian Gene Collection (MGC).</title>
        <authorList>
            <consortium name="The MGC Project Team"/>
        </authorList>
    </citation>
    <scope>NUCLEOTIDE SEQUENCE [LARGE SCALE MRNA] (ISOFORM 1)</scope>
    <source>
        <tissue>Uterus</tissue>
    </source>
</reference>
<reference key="7">
    <citation type="journal article" date="2007" name="BMC Genomics">
        <title>The full-ORF clone resource of the German cDNA consortium.</title>
        <authorList>
            <person name="Bechtel S."/>
            <person name="Rosenfelder H."/>
            <person name="Duda A."/>
            <person name="Schmidt C.P."/>
            <person name="Ernst U."/>
            <person name="Wellenreuther R."/>
            <person name="Mehrle A."/>
            <person name="Schuster C."/>
            <person name="Bahr A."/>
            <person name="Bloecker H."/>
            <person name="Heubner D."/>
            <person name="Hoerlein A."/>
            <person name="Michel G."/>
            <person name="Wedler H."/>
            <person name="Koehrer K."/>
            <person name="Ottenwaelder B."/>
            <person name="Poustka A."/>
            <person name="Wiemann S."/>
            <person name="Schupp I."/>
        </authorList>
    </citation>
    <scope>NUCLEOTIDE SEQUENCE [LARGE SCALE MRNA] OF 63-245 (ISOFORM 1)</scope>
    <source>
        <tissue>Testis</tissue>
    </source>
</reference>
<reference key="8">
    <citation type="journal article" date="2006" name="J. Biol. Chem.">
        <title>NARF, an nemo-like kinase (NLK)-associated ring finger protein regulates the ubiquitylation and degradation of T cell factor/lymphoid enhancer factor (TCF/LEF).</title>
        <authorList>
            <person name="Yamada M."/>
            <person name="Ohnishi J."/>
            <person name="Ohkawara B."/>
            <person name="Iemura S."/>
            <person name="Satoh K."/>
            <person name="Hyodo-Miura J."/>
            <person name="Kawachi K."/>
            <person name="Natsume T."/>
            <person name="Shibuya H."/>
        </authorList>
    </citation>
    <scope>FUNCTION</scope>
    <scope>INTERACTION WITH NLK</scope>
</reference>
<reference key="9">
    <citation type="journal article" date="2007" name="Science">
        <title>ATM and ATR substrate analysis reveals extensive protein networks responsive to DNA damage.</title>
        <authorList>
            <person name="Matsuoka S."/>
            <person name="Ballif B.A."/>
            <person name="Smogorzewska A."/>
            <person name="McDonald E.R. III"/>
            <person name="Hurov K.E."/>
            <person name="Luo J."/>
            <person name="Bakalarski C.E."/>
            <person name="Zhao Z."/>
            <person name="Solimini N."/>
            <person name="Lerenthal Y."/>
            <person name="Shiloh Y."/>
            <person name="Gygi S.P."/>
            <person name="Elledge S.J."/>
        </authorList>
    </citation>
    <scope>IDENTIFICATION BY MASS SPECTROMETRY [LARGE SCALE ANALYSIS]</scope>
    <source>
        <tissue>Embryonic kidney</tissue>
    </source>
</reference>
<reference key="10">
    <citation type="journal article" date="2009" name="Anal. Chem.">
        <title>Lys-N and trypsin cover complementary parts of the phosphoproteome in a refined SCX-based approach.</title>
        <authorList>
            <person name="Gauci S."/>
            <person name="Helbig A.O."/>
            <person name="Slijper M."/>
            <person name="Krijgsveld J."/>
            <person name="Heck A.J."/>
            <person name="Mohammed S."/>
        </authorList>
    </citation>
    <scope>ACETYLATION [LARGE SCALE ANALYSIS] AT ALA-2</scope>
    <scope>CLEAVAGE OF INITIATOR METHIONINE [LARGE SCALE ANALYSIS]</scope>
    <scope>IDENTIFICATION BY MASS SPECTROMETRY [LARGE SCALE ANALYSIS]</scope>
</reference>
<reference key="11">
    <citation type="journal article" date="2013" name="J. Proteome Res.">
        <title>Toward a comprehensive characterization of a human cancer cell phosphoproteome.</title>
        <authorList>
            <person name="Zhou H."/>
            <person name="Di Palma S."/>
            <person name="Preisinger C."/>
            <person name="Peng M."/>
            <person name="Polat A.N."/>
            <person name="Heck A.J."/>
            <person name="Mohammed S."/>
        </authorList>
    </citation>
    <scope>PHOSPHORYLATION [LARGE SCALE ANALYSIS] AT THR-142</scope>
    <scope>IDENTIFICATION BY MASS SPECTROMETRY [LARGE SCALE ANALYSIS]</scope>
    <source>
        <tissue>Cervix carcinoma</tissue>
        <tissue>Erythroleukemia</tissue>
    </source>
</reference>
<reference key="12">
    <citation type="journal article" date="2015" name="Nat. Cell Biol.">
        <title>The RNF138 E3 ligase displaces Ku to promote DNA end resection and regulate DNA repair pathway choice.</title>
        <authorList>
            <person name="Ismail I.H."/>
            <person name="Gagne J.P."/>
            <person name="Genois M.M."/>
            <person name="Strickfaden H."/>
            <person name="McDonald D."/>
            <person name="Xu Z."/>
            <person name="Poirier G.G."/>
            <person name="Masson J.Y."/>
            <person name="Hendzel M.J."/>
        </authorList>
    </citation>
    <scope>FUNCTION</scope>
    <scope>DNA-BINDING</scope>
    <scope>SUBCELLULAR LOCATION</scope>
    <scope>INTERACTION WITH XRCC5</scope>
    <scope>DOMAIN</scope>
    <scope>MUTAGENESIS OF CYS-18 AND CYS-54</scope>
</reference>
<reference key="13">
    <citation type="journal article" date="2015" name="Nat. Cell Biol.">
        <title>Systematic E2 screening reveals a UBE2D-RNF138-CtIP axis promoting DNA repair.</title>
        <authorList>
            <person name="Schmidt C.K."/>
            <person name="Galanty Y."/>
            <person name="Sczaniecka-Clift M."/>
            <person name="Coates J."/>
            <person name="Jhujh S."/>
            <person name="Demir M."/>
            <person name="Cornwell M."/>
            <person name="Beli P."/>
            <person name="Jackson S.P."/>
        </authorList>
    </citation>
    <scope>FUNCTION</scope>
    <scope>SUBCELLULAR LOCATION</scope>
    <scope>INTERACTION WITH RBBP8</scope>
    <scope>MUTAGENESIS OF 18-CYS--CYS-21</scope>
</reference>
<gene>
    <name evidence="11" type="primary">RNF138</name>
    <name evidence="9" type="synonym">NARF</name>
    <name type="ORF">HSD-4</name>
    <name type="ORF">HSD4</name>
</gene>
<keyword id="KW-0007">Acetylation</keyword>
<keyword id="KW-0025">Alternative splicing</keyword>
<keyword id="KW-0158">Chromosome</keyword>
<keyword id="KW-0227">DNA damage</keyword>
<keyword id="KW-0234">DNA repair</keyword>
<keyword id="KW-0238">DNA-binding</keyword>
<keyword id="KW-0479">Metal-binding</keyword>
<keyword id="KW-0597">Phosphoprotein</keyword>
<keyword id="KW-1267">Proteomics identification</keyword>
<keyword id="KW-1185">Reference proteome</keyword>
<keyword id="KW-0677">Repeat</keyword>
<keyword id="KW-0808">Transferase</keyword>
<keyword id="KW-0832">Ubl conjugation</keyword>
<keyword id="KW-0833">Ubl conjugation pathway</keyword>
<keyword id="KW-0879">Wnt signaling pathway</keyword>
<keyword id="KW-0862">Zinc</keyword>
<keyword id="KW-0863">Zinc-finger</keyword>
<proteinExistence type="evidence at protein level"/>
<protein>
    <recommendedName>
        <fullName evidence="10">E3 ubiquitin-protein ligase RNF138</fullName>
        <ecNumber evidence="10">2.3.2.27</ecNumber>
    </recommendedName>
    <alternativeName>
        <fullName evidence="9">Nemo-like kinase-associated RING finger protein</fullName>
        <shortName evidence="9">NLK-associated RING finger protein</shortName>
        <shortName evidence="9">hNARF</shortName>
    </alternativeName>
    <alternativeName>
        <fullName evidence="10">RING finger protein 138</fullName>
    </alternativeName>
    <alternativeName>
        <fullName evidence="10">RING-type E3 ubiquitin transferase RNF138</fullName>
    </alternativeName>
</protein>
<name>RN138_HUMAN</name>
<comment type="function">
    <text evidence="5 6 7">E3 ubiquitin-protein ligase involved in DNA damage response by promoting DNA resection and homologous recombination (PubMed:26502055, PubMed:26502057). Recruited to sites of double-strand breaks following DNA damage and specifically promotes double-strand break repair via homologous recombination (PubMed:26502055, PubMed:26502057). Two different, non-exclusive, mechanisms have been proposed. According to a report, regulates the choice of double-strand break repair by favoring homologous recombination over non-homologous end joining (NHEJ): acts by mediating ubiquitination of XRCC5/Ku80, leading to remove the Ku complex from DNA breaks, thereby promoting homologous recombination (PubMed:26502055). According to another report, cooperates with UBE2Ds E2 ubiquitin ligases (UBE2D1, UBE2D2, UBE2D3 or UBE2D4) to promote homologous recombination by mediating ubiquitination of RBBP8/CtIP (PubMed:26502057). Together with NLK, involved in the ubiquitination and degradation of TCF/LEF (PubMed:16714285). Also exhibits auto-ubiquitination activity in combination with UBE2K (PubMed:16714285). May act as a negative regulator in the Wnt/beta-catenin-mediated signaling pathway (PubMed:16714285).</text>
</comment>
<comment type="catalytic activity">
    <reaction evidence="10">
        <text>S-ubiquitinyl-[E2 ubiquitin-conjugating enzyme]-L-cysteine + [acceptor protein]-L-lysine = [E2 ubiquitin-conjugating enzyme]-L-cysteine + N(6)-ubiquitinyl-[acceptor protein]-L-lysine.</text>
        <dbReference type="EC" id="2.3.2.27"/>
    </reaction>
</comment>
<comment type="pathway">
    <text evidence="5 6 7">Protein modification; protein ubiquitination.</text>
</comment>
<comment type="subunit">
    <text evidence="5 6 7">Interacts with NLK (PubMed:16714285). Interacts with XRCC5/Ku80 (PubMed:26502055). Interacts with RBBP8/CtIP (PubMed:26502057).</text>
</comment>
<comment type="interaction">
    <interactant intactId="EBI-749039">
        <id>Q8WVD3</id>
    </interactant>
    <interactant intactId="EBI-491169">
        <id>P07550</id>
        <label>ADRB2</label>
    </interactant>
    <organismsDiffer>false</organismsDiffer>
    <experiments>3</experiments>
</comment>
<comment type="interaction">
    <interactant intactId="EBI-749039">
        <id>Q8WVD3</id>
    </interactant>
    <interactant intactId="EBI-10976677">
        <id>G5E9A7</id>
        <label>DMWD</label>
    </interactant>
    <organismsDiffer>false</organismsDiffer>
    <experiments>3</experiments>
</comment>
<comment type="interaction">
    <interactant intactId="EBI-749039">
        <id>Q8WVD3</id>
    </interactant>
    <interactant intactId="EBI-743414">
        <id>O95967</id>
        <label>EFEMP2</label>
    </interactant>
    <organismsDiffer>false</organismsDiffer>
    <experiments>3</experiments>
</comment>
<comment type="interaction">
    <interactant intactId="EBI-749039">
        <id>Q8WVD3</id>
    </interactant>
    <interactant intactId="EBI-348399">
        <id>P22607</id>
        <label>FGFR3</label>
    </interactant>
    <organismsDiffer>false</organismsDiffer>
    <experiments>3</experiments>
</comment>
<comment type="interaction">
    <interactant intactId="EBI-749039">
        <id>Q8WVD3</id>
    </interactant>
    <interactant intactId="EBI-949340">
        <id>Q16595</id>
        <label>FXN</label>
    </interactant>
    <organismsDiffer>false</organismsDiffer>
    <experiments>3</experiments>
</comment>
<comment type="interaction">
    <interactant intactId="EBI-749039">
        <id>Q8WVD3</id>
    </interactant>
    <interactant intactId="EBI-8285963">
        <id>Q14957</id>
        <label>GRIN2C</label>
    </interactant>
    <organismsDiffer>false</organismsDiffer>
    <experiments>3</experiments>
</comment>
<comment type="interaction">
    <interactant intactId="EBI-749039">
        <id>Q8WVD3</id>
    </interactant>
    <interactant intactId="EBI-747754">
        <id>P28799</id>
        <label>GRN</label>
    </interactant>
    <organismsDiffer>false</organismsDiffer>
    <experiments>3</experiments>
</comment>
<comment type="interaction">
    <interactant intactId="EBI-749039">
        <id>Q8WVD3</id>
    </interactant>
    <interactant intactId="EBI-351506">
        <id>P06396</id>
        <label>GSN</label>
    </interactant>
    <organismsDiffer>false</organismsDiffer>
    <experiments>3</experiments>
</comment>
<comment type="interaction">
    <interactant intactId="EBI-749039">
        <id>Q8WVD3</id>
    </interactant>
    <interactant intactId="EBI-350145">
        <id>P01112</id>
        <label>HRAS</label>
    </interactant>
    <organismsDiffer>false</organismsDiffer>
    <experiments>3</experiments>
</comment>
<comment type="interaction">
    <interactant intactId="EBI-749039">
        <id>Q8WVD3</id>
    </interactant>
    <interactant intactId="EBI-517086">
        <id>O43464</id>
        <label>HTRA2</label>
    </interactant>
    <organismsDiffer>false</organismsDiffer>
    <experiments>3</experiments>
</comment>
<comment type="interaction">
    <interactant intactId="EBI-749039">
        <id>Q8WVD3</id>
    </interactant>
    <interactant intactId="EBI-1055254">
        <id>Q8WXH2</id>
        <label>JPH3</label>
    </interactant>
    <organismsDiffer>false</organismsDiffer>
    <experiments>3</experiments>
</comment>
<comment type="interaction">
    <interactant intactId="EBI-749039">
        <id>Q8WVD3</id>
    </interactant>
    <interactant intactId="EBI-10975473">
        <id>O60333-2</id>
        <label>KIF1B</label>
    </interactant>
    <organismsDiffer>false</organismsDiffer>
    <experiments>3</experiments>
</comment>
<comment type="interaction">
    <interactant intactId="EBI-749039">
        <id>Q8WVD3</id>
    </interactant>
    <interactant intactId="EBI-351935">
        <id>P02545</id>
        <label>LMNA</label>
    </interactant>
    <organismsDiffer>false</organismsDiffer>
    <experiments>3</experiments>
</comment>
<comment type="interaction">
    <interactant intactId="EBI-749039">
        <id>Q8WVD3</id>
    </interactant>
    <interactant intactId="EBI-1014514">
        <id>P35240-4</id>
        <label>NF2</label>
    </interactant>
    <organismsDiffer>false</organismsDiffer>
    <experiments>3</experiments>
</comment>
<comment type="interaction">
    <interactant intactId="EBI-749039">
        <id>Q8WVD3</id>
    </interactant>
    <interactant intactId="EBI-741158">
        <id>Q96HA8</id>
        <label>NTAQ1</label>
    </interactant>
    <organismsDiffer>false</organismsDiffer>
    <experiments>3</experiments>
</comment>
<comment type="interaction">
    <interactant intactId="EBI-749039">
        <id>Q8WVD3</id>
    </interactant>
    <interactant intactId="EBI-50433196">
        <id>A0A6Q8PF08</id>
        <label>PMP22</label>
    </interactant>
    <organismsDiffer>false</organismsDiffer>
    <experiments>3</experiments>
</comment>
<comment type="interaction">
    <interactant intactId="EBI-749039">
        <id>Q8WVD3</id>
    </interactant>
    <interactant intactId="EBI-21251460">
        <id>O60260-5</id>
        <label>PRKN</label>
    </interactant>
    <organismsDiffer>false</organismsDiffer>
    <experiments>3</experiments>
</comment>
<comment type="interaction">
    <interactant intactId="EBI-749039">
        <id>Q8WVD3</id>
    </interactant>
    <interactant intactId="EBI-396669">
        <id>Q9Y3C5</id>
        <label>RNF11</label>
    </interactant>
    <organismsDiffer>false</organismsDiffer>
    <experiments>3</experiments>
</comment>
<comment type="interaction">
    <interactant intactId="EBI-749039">
        <id>Q8WVD3</id>
    </interactant>
    <interactant intactId="EBI-985879">
        <id>P37840</id>
        <label>SNCA</label>
    </interactant>
    <organismsDiffer>false</organismsDiffer>
    <experiments>3</experiments>
</comment>
<comment type="interaction">
    <interactant intactId="EBI-749039">
        <id>Q8WVD3</id>
    </interactant>
    <interactant intactId="EBI-5235340">
        <id>Q7Z699</id>
        <label>SPRED1</label>
    </interactant>
    <organismsDiffer>false</organismsDiffer>
    <experiments>3</experiments>
</comment>
<comment type="interaction">
    <interactant intactId="EBI-749039">
        <id>Q8WVD3</id>
    </interactant>
    <interactant intactId="EBI-372899">
        <id>Q13148</id>
        <label>TARDBP</label>
    </interactant>
    <organismsDiffer>false</organismsDiffer>
    <experiments>3</experiments>
</comment>
<comment type="interaction">
    <interactant intactId="EBI-749039">
        <id>Q8WVD3</id>
    </interactant>
    <interactant intactId="EBI-12806590">
        <id>Q86WV8</id>
        <label>TSC1</label>
    </interactant>
    <organismsDiffer>false</organismsDiffer>
    <experiments>3</experiments>
</comment>
<comment type="interaction">
    <interactant intactId="EBI-749039">
        <id>Q8WVD3</id>
    </interactant>
    <interactant intactId="EBI-8994397">
        <id>Q5T7W7</id>
        <label>TSTD2</label>
    </interactant>
    <organismsDiffer>false</organismsDiffer>
    <experiments>3</experiments>
</comment>
<comment type="interaction">
    <interactant intactId="EBI-749039">
        <id>Q8WVD3</id>
    </interactant>
    <interactant intactId="EBI-473850">
        <id>P61086</id>
        <label>UBE2K</label>
    </interactant>
    <organismsDiffer>false</organismsDiffer>
    <experiments>12</experiments>
</comment>
<comment type="interaction">
    <interactant intactId="EBI-749039">
        <id>Q8WVD3</id>
    </interactant>
    <interactant intactId="EBI-25900580">
        <id>Q9Y649</id>
    </interactant>
    <organismsDiffer>false</organismsDiffer>
    <experiments>3</experiments>
</comment>
<comment type="subcellular location">
    <subcellularLocation>
        <location evidence="6 7">Chromosome</location>
    </subcellularLocation>
    <text evidence="6 7">Recruited at DNA damage sites (PubMed:26502055). Localizes to sites of double-strand break: localization to double-strand break sites is mediated by the zinc fingers (PubMed:26502055, PubMed:26502057).</text>
</comment>
<comment type="alternative products">
    <event type="alternative splicing"/>
    <isoform>
        <id>Q8WVD3-1</id>
        <name>1</name>
        <sequence type="displayed"/>
    </isoform>
    <isoform>
        <id>Q8WVD3-2</id>
        <name>2</name>
        <sequence type="described" ref="VSP_021732"/>
    </isoform>
</comment>
<comment type="domain">
    <text evidence="6">The zinc finger domains (C2H2-type and C2HC-type zinc fingers) bind DNA and mediate recruitment to double-strand break sites. They show strong preference for DNA with 5'- or 3'-single-stranded overhangs, while they do not bind blunt-ended double-stranded DNA or poly(ADP-ribose) (PAR) polymers.</text>
</comment>
<comment type="PTM">
    <text evidence="5">Auto-ubiquitinated.</text>
</comment>
<evidence type="ECO:0000255" key="1">
    <source>
        <dbReference type="PROSITE-ProRule" id="PRU00042"/>
    </source>
</evidence>
<evidence type="ECO:0000255" key="2">
    <source>
        <dbReference type="PROSITE-ProRule" id="PRU00175"/>
    </source>
</evidence>
<evidence type="ECO:0000255" key="3">
    <source>
        <dbReference type="PROSITE-ProRule" id="PRU01144"/>
    </source>
</evidence>
<evidence type="ECO:0000256" key="4">
    <source>
        <dbReference type="SAM" id="MobiDB-lite"/>
    </source>
</evidence>
<evidence type="ECO:0000269" key="5">
    <source>
    </source>
</evidence>
<evidence type="ECO:0000269" key="6">
    <source>
    </source>
</evidence>
<evidence type="ECO:0000269" key="7">
    <source>
    </source>
</evidence>
<evidence type="ECO:0000303" key="8">
    <source>
    </source>
</evidence>
<evidence type="ECO:0000303" key="9">
    <source>
    </source>
</evidence>
<evidence type="ECO:0000305" key="10"/>
<evidence type="ECO:0000312" key="11">
    <source>
        <dbReference type="HGNC" id="HGNC:17765"/>
    </source>
</evidence>
<evidence type="ECO:0007744" key="12">
    <source>
    </source>
</evidence>
<evidence type="ECO:0007744" key="13">
    <source>
    </source>
</evidence>
<sequence>MAEDLSAATSYTEDDFYCPVCQEVLKTPVRTTACQHVFCRKCFLTAMRESGAHCPLCRGNVTRRERACPERALDLENIMRKFSGSCRCCAKQIKFYRMRHHYKSCKKYQDEYGVSSIIPNFQISQDSVGNSNRSETSTSDNTETYQENTSSSGHPTFKCPLCQESNFTRQRLLDHCNSNHLFQIVPVTCPICVSLPWGDPSQITRNFVSHLNQRHQFDYGEFVNLQLDEETQYQTAVEESFQVNI</sequence>